<reference key="1">
    <citation type="journal article" date="1992" name="Virology">
        <title>The complete nucleotide sequence of pepper mottle virus genomic RNA: comparison of the encoded polyprotein with those of other sequenced potyviruses.</title>
        <authorList>
            <person name="Vance V.B."/>
            <person name="Moore D."/>
            <person name="Turpen T.H."/>
            <person name="Bracker A."/>
            <person name="Hollowell V.C."/>
        </authorList>
    </citation>
    <scope>NUCLEOTIDE SEQUENCE [GENOMIC RNA]</scope>
</reference>
<reference key="2">
    <citation type="journal article" date="2001" name="Virus Res.">
        <title>Potyvirus proteins: a wealth of functions.</title>
        <authorList>
            <person name="Urcuqui-Inchima S."/>
            <person name="Haenni A.L."/>
            <person name="Bernardi F."/>
        </authorList>
    </citation>
    <scope>REVIEW</scope>
</reference>
<reference key="3">
    <citation type="journal article" date="2011" name="PLoS ONE">
        <title>Knock-down of both eIF4E1 and eIF4E2 genes confers broad-spectrum resistance against potyviruses in tomato.</title>
        <authorList>
            <person name="Mazier M."/>
            <person name="Flamain F."/>
            <person name="Nicolai M."/>
            <person name="Sarnette V."/>
            <person name="Caranta C."/>
        </authorList>
    </citation>
    <scope>INTERACTION WITH HOST TOMATO EIF4E1 (VIRAL GENOME-LINKED PROTEIN)</scope>
</reference>
<proteinExistence type="evidence at protein level"/>
<dbReference type="EC" id="3.4.21.-"/>
<dbReference type="EC" id="3.4.22.45" evidence="2"/>
<dbReference type="EC" id="3.6.4.-"/>
<dbReference type="EC" id="3.4.22.44"/>
<dbReference type="EC" id="2.7.7.48"/>
<dbReference type="EMBL" id="M96425">
    <property type="protein sequence ID" value="AAA46903.1"/>
    <property type="molecule type" value="Genomic_RNA"/>
</dbReference>
<dbReference type="PIR" id="A44062">
    <property type="entry name" value="A44062"/>
</dbReference>
<dbReference type="RefSeq" id="NP_041276.1">
    <property type="nucleotide sequence ID" value="NC_001517.1"/>
</dbReference>
<dbReference type="MEROPS" id="C04.002"/>
<dbReference type="MEROPS" id="C06.001"/>
<dbReference type="GeneID" id="1494047"/>
<dbReference type="KEGG" id="vg:1494047"/>
<dbReference type="Proteomes" id="UP000008157">
    <property type="component" value="Segment"/>
</dbReference>
<dbReference type="GO" id="GO:0019029">
    <property type="term" value="C:helical viral capsid"/>
    <property type="evidence" value="ECO:0007669"/>
    <property type="project" value="UniProtKB-KW"/>
</dbReference>
<dbReference type="GO" id="GO:0044161">
    <property type="term" value="C:host cell cytoplasmic vesicle"/>
    <property type="evidence" value="ECO:0007669"/>
    <property type="project" value="UniProtKB-SubCell"/>
</dbReference>
<dbReference type="GO" id="GO:0042025">
    <property type="term" value="C:host cell nucleus"/>
    <property type="evidence" value="ECO:0007669"/>
    <property type="project" value="UniProtKB-SubCell"/>
</dbReference>
<dbReference type="GO" id="GO:0005524">
    <property type="term" value="F:ATP binding"/>
    <property type="evidence" value="ECO:0007669"/>
    <property type="project" value="UniProtKB-KW"/>
</dbReference>
<dbReference type="GO" id="GO:0004197">
    <property type="term" value="F:cysteine-type endopeptidase activity"/>
    <property type="evidence" value="ECO:0007669"/>
    <property type="project" value="InterPro"/>
</dbReference>
<dbReference type="GO" id="GO:0004386">
    <property type="term" value="F:helicase activity"/>
    <property type="evidence" value="ECO:0007669"/>
    <property type="project" value="UniProtKB-KW"/>
</dbReference>
<dbReference type="GO" id="GO:0016818">
    <property type="term" value="F:hydrolase activity, acting on acid anhydrides, in phosphorus-containing anhydrides"/>
    <property type="evidence" value="ECO:0007669"/>
    <property type="project" value="InterPro"/>
</dbReference>
<dbReference type="GO" id="GO:0003723">
    <property type="term" value="F:RNA binding"/>
    <property type="evidence" value="ECO:0007669"/>
    <property type="project" value="InterPro"/>
</dbReference>
<dbReference type="GO" id="GO:0003968">
    <property type="term" value="F:RNA-directed RNA polymerase activity"/>
    <property type="evidence" value="ECO:0007669"/>
    <property type="project" value="UniProtKB-KW"/>
</dbReference>
<dbReference type="GO" id="GO:0008236">
    <property type="term" value="F:serine-type peptidase activity"/>
    <property type="evidence" value="ECO:0007669"/>
    <property type="project" value="UniProtKB-KW"/>
</dbReference>
<dbReference type="GO" id="GO:0005198">
    <property type="term" value="F:structural molecule activity"/>
    <property type="evidence" value="ECO:0007669"/>
    <property type="project" value="InterPro"/>
</dbReference>
<dbReference type="GO" id="GO:0006351">
    <property type="term" value="P:DNA-templated transcription"/>
    <property type="evidence" value="ECO:0007669"/>
    <property type="project" value="InterPro"/>
</dbReference>
<dbReference type="GO" id="GO:0006508">
    <property type="term" value="P:proteolysis"/>
    <property type="evidence" value="ECO:0007669"/>
    <property type="project" value="UniProtKB-KW"/>
</dbReference>
<dbReference type="GO" id="GO:0052170">
    <property type="term" value="P:symbiont-mediated suppression of host innate immune response"/>
    <property type="evidence" value="ECO:0007669"/>
    <property type="project" value="UniProtKB-KW"/>
</dbReference>
<dbReference type="GO" id="GO:0039694">
    <property type="term" value="P:viral RNA genome replication"/>
    <property type="evidence" value="ECO:0007669"/>
    <property type="project" value="InterPro"/>
</dbReference>
<dbReference type="GO" id="GO:0075523">
    <property type="term" value="P:viral translational frameshifting"/>
    <property type="evidence" value="ECO:0007669"/>
    <property type="project" value="UniProtKB-KW"/>
</dbReference>
<dbReference type="CDD" id="cd23175">
    <property type="entry name" value="ps-ssRNAv_Potyviridae_RdRp"/>
    <property type="match status" value="1"/>
</dbReference>
<dbReference type="Gene3D" id="3.30.70.270">
    <property type="match status" value="1"/>
</dbReference>
<dbReference type="Gene3D" id="3.90.70.150">
    <property type="entry name" value="Helper component proteinase"/>
    <property type="match status" value="1"/>
</dbReference>
<dbReference type="Gene3D" id="3.40.50.300">
    <property type="entry name" value="P-loop containing nucleotide triphosphate hydrolases"/>
    <property type="match status" value="2"/>
</dbReference>
<dbReference type="Gene3D" id="2.40.10.10">
    <property type="entry name" value="Trypsin-like serine proteases"/>
    <property type="match status" value="2"/>
</dbReference>
<dbReference type="InterPro" id="IPR011545">
    <property type="entry name" value="DEAD/DEAH_box_helicase_dom"/>
</dbReference>
<dbReference type="InterPro" id="IPR043502">
    <property type="entry name" value="DNA/RNA_pol_sf"/>
</dbReference>
<dbReference type="InterPro" id="IPR001456">
    <property type="entry name" value="HC-pro"/>
</dbReference>
<dbReference type="InterPro" id="IPR031159">
    <property type="entry name" value="HC_PRO_CPD_dom"/>
</dbReference>
<dbReference type="InterPro" id="IPR042308">
    <property type="entry name" value="HC_PRO_CPD_sf"/>
</dbReference>
<dbReference type="InterPro" id="IPR014001">
    <property type="entry name" value="Helicase_ATP-bd"/>
</dbReference>
<dbReference type="InterPro" id="IPR001650">
    <property type="entry name" value="Helicase_C-like"/>
</dbReference>
<dbReference type="InterPro" id="IPR027417">
    <property type="entry name" value="P-loop_NTPase"/>
</dbReference>
<dbReference type="InterPro" id="IPR002540">
    <property type="entry name" value="Pept_S30_P1_potyvir"/>
</dbReference>
<dbReference type="InterPro" id="IPR009003">
    <property type="entry name" value="Peptidase_S1_PA"/>
</dbReference>
<dbReference type="InterPro" id="IPR043504">
    <property type="entry name" value="Peptidase_S1_PA_chymotrypsin"/>
</dbReference>
<dbReference type="InterPro" id="IPR001592">
    <property type="entry name" value="Poty_coat"/>
</dbReference>
<dbReference type="InterPro" id="IPR001730">
    <property type="entry name" value="Potyv_NIa-pro_dom"/>
</dbReference>
<dbReference type="InterPro" id="IPR039560">
    <property type="entry name" value="Potyvirid-P3"/>
</dbReference>
<dbReference type="InterPro" id="IPR013648">
    <property type="entry name" value="PP_Potyviridae"/>
</dbReference>
<dbReference type="InterPro" id="IPR043128">
    <property type="entry name" value="Rev_trsase/Diguanyl_cyclase"/>
</dbReference>
<dbReference type="InterPro" id="IPR001205">
    <property type="entry name" value="RNA-dir_pol_C"/>
</dbReference>
<dbReference type="InterPro" id="IPR007094">
    <property type="entry name" value="RNA-dir_pol_PSvirus"/>
</dbReference>
<dbReference type="PANTHER" id="PTHR43519">
    <property type="entry name" value="ATP-DEPENDENT RNA HELICASE HRPB"/>
    <property type="match status" value="1"/>
</dbReference>
<dbReference type="PANTHER" id="PTHR43519:SF1">
    <property type="entry name" value="ATP-DEPENDENT RNA HELICASE HRPB"/>
    <property type="match status" value="1"/>
</dbReference>
<dbReference type="Pfam" id="PF00270">
    <property type="entry name" value="DEAD"/>
    <property type="match status" value="1"/>
</dbReference>
<dbReference type="Pfam" id="PF00271">
    <property type="entry name" value="Helicase_C"/>
    <property type="match status" value="1"/>
</dbReference>
<dbReference type="Pfam" id="PF00863">
    <property type="entry name" value="Peptidase_C4"/>
    <property type="match status" value="1"/>
</dbReference>
<dbReference type="Pfam" id="PF00851">
    <property type="entry name" value="Peptidase_C6"/>
    <property type="match status" value="1"/>
</dbReference>
<dbReference type="Pfam" id="PF01577">
    <property type="entry name" value="Peptidase_S30"/>
    <property type="match status" value="1"/>
</dbReference>
<dbReference type="Pfam" id="PF00767">
    <property type="entry name" value="Poty_coat"/>
    <property type="match status" value="1"/>
</dbReference>
<dbReference type="Pfam" id="PF08440">
    <property type="entry name" value="Poty_PP"/>
    <property type="match status" value="1"/>
</dbReference>
<dbReference type="Pfam" id="PF13608">
    <property type="entry name" value="Potyvirid-P3"/>
    <property type="match status" value="1"/>
</dbReference>
<dbReference type="Pfam" id="PF00680">
    <property type="entry name" value="RdRP_1"/>
    <property type="match status" value="1"/>
</dbReference>
<dbReference type="PRINTS" id="PR00966">
    <property type="entry name" value="NIAPOTYPTASE"/>
</dbReference>
<dbReference type="SMART" id="SM00487">
    <property type="entry name" value="DEXDc"/>
    <property type="match status" value="1"/>
</dbReference>
<dbReference type="SMART" id="SM00490">
    <property type="entry name" value="HELICc"/>
    <property type="match status" value="1"/>
</dbReference>
<dbReference type="SUPFAM" id="SSF56672">
    <property type="entry name" value="DNA/RNA polymerases"/>
    <property type="match status" value="1"/>
</dbReference>
<dbReference type="SUPFAM" id="SSF52540">
    <property type="entry name" value="P-loop containing nucleoside triphosphate hydrolases"/>
    <property type="match status" value="2"/>
</dbReference>
<dbReference type="SUPFAM" id="SSF50494">
    <property type="entry name" value="Trypsin-like serine proteases"/>
    <property type="match status" value="1"/>
</dbReference>
<dbReference type="PROSITE" id="PS51744">
    <property type="entry name" value="HC_PRO_CPD"/>
    <property type="match status" value="1"/>
</dbReference>
<dbReference type="PROSITE" id="PS51192">
    <property type="entry name" value="HELICASE_ATP_BIND_1"/>
    <property type="match status" value="1"/>
</dbReference>
<dbReference type="PROSITE" id="PS51194">
    <property type="entry name" value="HELICASE_CTER"/>
    <property type="match status" value="1"/>
</dbReference>
<dbReference type="PROSITE" id="PS51436">
    <property type="entry name" value="POTYVIRUS_NIA_PRO"/>
    <property type="match status" value="1"/>
</dbReference>
<dbReference type="PROSITE" id="PS51871">
    <property type="entry name" value="PV_P1_PRO"/>
    <property type="match status" value="1"/>
</dbReference>
<dbReference type="PROSITE" id="PS50507">
    <property type="entry name" value="RDRP_SSRNA_POS"/>
    <property type="match status" value="1"/>
</dbReference>
<comment type="function">
    <molecule>Helper component proteinase</molecule>
    <text evidence="2">Required for aphid transmission and also has proteolytic activity. Only cleaves a Gly-Gly dipeptide at its own C-terminus. Interacts with virions and aphid stylets. Acts as a suppressor of RNA-mediated gene silencing, also known as post-transcriptional gene silencing (PTGS), a mechanism of plant viral defense that limits the accumulation of viral RNAs. May have RNA-binding activity.</text>
</comment>
<comment type="function">
    <molecule>Cytoplasmic inclusion protein</molecule>
    <text>Has helicase activity. It may be involved in replication.</text>
</comment>
<comment type="function">
    <molecule>6 kDa protein 1</molecule>
    <text evidence="4 8">Indispensable for virus replication (By similarity). Reduces the abundance of host transcripts related to jasmonic acid biosynthesis therefore altering the host defenses (By similarity). In order to increase its own stability, decreases host protein degradation pathways (By similarity).</text>
</comment>
<comment type="function">
    <molecule>6 kDa protein 2</molecule>
    <text evidence="3">Indispensable for virus replication.</text>
</comment>
<comment type="function">
    <molecule>Viral genome-linked protein</molecule>
    <text evidence="6">Mediates the cap-independent, EIF4E-dependent translation of viral genomic RNAs (By similarity). Binds to the cap-binding site of host EIF4E and thus interferes with the host EIF4E-dependent mRNA export and translation (By similarity). VPg-RNA directly binds EIF4E and is a template for transcription (By similarity). Also forms trimeric complexes with EIF4E-EIF4G, which are templates for translation (By similarity).</text>
</comment>
<comment type="function">
    <molecule>Nuclear inclusion protein A</molecule>
    <text evidence="2">Has RNA-binding and proteolytic activities.</text>
</comment>
<comment type="function">
    <molecule>Nuclear inclusion protein B</molecule>
    <text>An RNA-dependent RNA polymerase that plays an essential role in the virus replication.</text>
</comment>
<comment type="function">
    <molecule>Capsid protein</molecule>
    <text evidence="2">Involved in aphid transmission, cell-to-cell and systemis movement, encapsidation of the viral RNA and in the regulation of viral RNA amplification.</text>
</comment>
<comment type="catalytic activity">
    <molecule>Nuclear inclusion protein B</molecule>
    <reaction evidence="10">
        <text>RNA(n) + a ribonucleoside 5'-triphosphate = RNA(n+1) + diphosphate</text>
        <dbReference type="Rhea" id="RHEA:21248"/>
        <dbReference type="Rhea" id="RHEA-COMP:14527"/>
        <dbReference type="Rhea" id="RHEA-COMP:17342"/>
        <dbReference type="ChEBI" id="CHEBI:33019"/>
        <dbReference type="ChEBI" id="CHEBI:61557"/>
        <dbReference type="ChEBI" id="CHEBI:140395"/>
        <dbReference type="EC" id="2.7.7.48"/>
    </reaction>
</comment>
<comment type="catalytic activity">
    <molecule>Nuclear inclusion protein A</molecule>
    <reaction evidence="2">
        <text>Hydrolyzes glutaminyl bonds, and activity is further restricted by preferences for the amino acids in P6 - P1' that vary with the species of potyvirus, e.g. Glu-Xaa-Xaa-Tyr-Xaa-Gln-|-(Ser or Gly) for the enzyme from tobacco etch virus. The natural substrate is the viral polyprotein, but other proteins and oligopeptides containing the appropriate consensus sequence are also cleaved.</text>
        <dbReference type="EC" id="3.4.22.44"/>
    </reaction>
</comment>
<comment type="catalytic activity">
    <molecule>Helper component proteinase</molecule>
    <reaction evidence="2">
        <text>Hydrolyzes a Gly-|-Gly bond at its own C-terminus, commonly in the sequence -Tyr-Xaa-Val-Gly-|-Gly, in the processing of the potyviral polyprotein.</text>
        <dbReference type="EC" id="3.4.22.45"/>
    </reaction>
</comment>
<comment type="subunit">
    <molecule>Viral genome-linked protein</molecule>
    <text evidence="6 18">Interacts with host eIF4E protein (via cap-binding region); this interaction mediates the translation of the VPg-viral RNA conjugates (Probable). Part of a complex that comprises VPg, RNA, host EIF4E and EIF4G; this interaction mediates the translation of the VPg-viral RNA conjugates (By similarity).</text>
</comment>
<comment type="subcellular location">
    <molecule>6 kDa protein 1</molecule>
    <subcellularLocation>
        <location>Host cytoplasmic vesicle</location>
    </subcellularLocation>
    <text evidence="4">Probably colocalizes with 6K2-induced vesicles associated with host chloroplasts.</text>
</comment>
<comment type="subcellular location">
    <molecule>6 kDa protein 2</molecule>
    <subcellularLocation>
        <location evidence="3">Host cytoplasmic vesicle</location>
    </subcellularLocation>
    <text evidence="3">6K-induced vesicles associate with host chloroplasts.</text>
</comment>
<comment type="subcellular location">
    <molecule>Viral genome-linked protein</molecule>
    <subcellularLocation>
        <location evidence="7">Host nucleus</location>
    </subcellularLocation>
    <text evidence="7">Binds to host plant eIF4E proteins in the host nucleus.</text>
</comment>
<comment type="subcellular location">
    <molecule>Capsid protein</molecule>
    <subcellularLocation>
        <location evidence="17">Virion</location>
    </subcellularLocation>
</comment>
<comment type="alternative products">
    <event type="ribosomal frameshifting"/>
    <isoform>
        <id>Q01500-1</id>
        <name>Genome polyprotein</name>
        <sequence type="displayed"/>
    </isoform>
    <isoform>
        <id>P0CK01-1</id>
        <name>P3N-PIPO polyprotein</name>
        <sequence type="external"/>
    </isoform>
</comment>
<comment type="domain">
    <molecule>Helper component proteinase</molecule>
    <text>The N-terminus is involved in interaction with stylets. The central part is involved in interaction with virions and the C-terminus is involved in cell-to cell movement of the virus.</text>
</comment>
<comment type="PTM">
    <molecule>Viral genome-linked protein</molecule>
    <text evidence="3">VPg is uridylylated by the polymerase and is covalently attached to the 5'-end of the genomic RNA. This uridylylated form acts as a nucleotide-peptide primer for the polymerase (By similarity).</text>
</comment>
<comment type="PTM">
    <molecule>Genome polyprotein</molecule>
    <text evidence="1">Potyviral RNA is expressed as two polyproteins which undergo post-translational proteolytic processing. Genome polyprotein is processed by NIa-pro, P1 and HC-pro proteinases resulting in the production of at least ten individual proteins. P3N-PIPO polyprotein is cleaved by P1 and HC-pro proteinases resulting in the production of three individual proteins. The P1 proteinase and the HC-pro cleave only their respective C-termini autocatalytically. 6K1 is essential for proper proteolytic separation of P3 from CI (By similarity).</text>
</comment>
<comment type="miscellaneous">
    <molecule>Isoform Genome polyprotein</molecule>
    <text>Produced by conventional translation.</text>
</comment>
<comment type="similarity">
    <text evidence="17">Belongs to the potyviridae genome polyprotein family.</text>
</comment>
<name>POLG_PEMVC</name>
<accession>Q01500</accession>
<protein>
    <recommendedName>
        <fullName>Genome polyprotein</fullName>
    </recommendedName>
    <component>
        <recommendedName>
            <fullName>P1 protease</fullName>
            <ecNumber>3.4.21.-</ecNumber>
        </recommendedName>
        <alternativeName>
            <fullName>Leader protease P1</fullName>
        </alternativeName>
        <alternativeName>
            <fullName>N-terminal protein</fullName>
        </alternativeName>
        <alternativeName>
            <fullName>P1 proteinase</fullName>
        </alternativeName>
    </component>
    <component>
        <recommendedName>
            <fullName>Helper component proteinase</fullName>
            <shortName>HC-pro</shortName>
            <ecNumber evidence="2">3.4.22.45</ecNumber>
        </recommendedName>
    </component>
    <component>
        <recommendedName>
            <fullName>Protein P3</fullName>
        </recommendedName>
    </component>
    <component>
        <recommendedName>
            <fullName>6 kDa protein 1</fullName>
            <shortName>6K1</shortName>
        </recommendedName>
    </component>
    <component>
        <recommendedName>
            <fullName>Cytoplasmic inclusion protein</fullName>
            <shortName>CI</shortName>
            <ecNumber>3.6.4.-</ecNumber>
        </recommendedName>
    </component>
    <component>
        <recommendedName>
            <fullName>6 kDa protein 2</fullName>
            <shortName>6K2</shortName>
        </recommendedName>
    </component>
    <component>
        <recommendedName>
            <fullName>Viral genome-linked protein</fullName>
        </recommendedName>
        <alternativeName>
            <fullName>VPg</fullName>
        </alternativeName>
    </component>
    <component>
        <recommendedName>
            <fullName>Nuclear inclusion protein A</fullName>
            <shortName>NI-a</shortName>
            <shortName>NIa</shortName>
            <ecNumber>3.4.22.44</ecNumber>
        </recommendedName>
        <alternativeName>
            <fullName>49 kDa proteinase</fullName>
            <shortName>49 kDa-Pro</shortName>
        </alternativeName>
        <alternativeName>
            <fullName>NIa-pro</fullName>
        </alternativeName>
    </component>
    <component>
        <recommendedName>
            <fullName>Nuclear inclusion protein B</fullName>
            <shortName>NI-b</shortName>
            <shortName>NIb</shortName>
            <ecNumber>2.7.7.48</ecNumber>
        </recommendedName>
        <alternativeName>
            <fullName>RNA-directed RNA polymerase</fullName>
        </alternativeName>
    </component>
    <component>
        <recommendedName>
            <fullName>Capsid protein</fullName>
            <shortName>CP</shortName>
        </recommendedName>
        <alternativeName>
            <fullName>Coat protein</fullName>
        </alternativeName>
    </component>
</protein>
<keyword id="KW-0067">ATP-binding</keyword>
<keyword id="KW-0167">Capsid protein</keyword>
<keyword id="KW-0191">Covalent protein-RNA linkage</keyword>
<keyword id="KW-1139">Helical capsid protein</keyword>
<keyword id="KW-0347">Helicase</keyword>
<keyword id="KW-1036">Host cytoplasmic vesicle</keyword>
<keyword id="KW-1048">Host nucleus</keyword>
<keyword id="KW-0945">Host-virus interaction</keyword>
<keyword id="KW-0378">Hydrolase</keyword>
<keyword id="KW-1090">Inhibition of host innate immune response by virus</keyword>
<keyword id="KW-0547">Nucleotide-binding</keyword>
<keyword id="KW-0548">Nucleotidyltransferase</keyword>
<keyword id="KW-0597">Phosphoprotein</keyword>
<keyword id="KW-0645">Protease</keyword>
<keyword id="KW-0688">Ribosomal frameshifting</keyword>
<keyword id="KW-0696">RNA-directed RNA polymerase</keyword>
<keyword id="KW-0720">Serine protease</keyword>
<keyword id="KW-0941">Suppressor of RNA silencing</keyword>
<keyword id="KW-0788">Thiol protease</keyword>
<keyword id="KW-0808">Transferase</keyword>
<keyword id="KW-0899">Viral immunoevasion</keyword>
<keyword id="KW-0693">Viral RNA replication</keyword>
<keyword id="KW-0946">Virion</keyword>
<organism>
    <name type="scientific">Pepper mottle virus (isolate California)</name>
    <name type="common">PeMV</name>
    <name type="synonym">PepMoV C</name>
    <dbReference type="NCBI Taxonomy" id="31737"/>
    <lineage>
        <taxon>Viruses</taxon>
        <taxon>Riboviria</taxon>
        <taxon>Orthornavirae</taxon>
        <taxon>Pisuviricota</taxon>
        <taxon>Stelpaviricetes</taxon>
        <taxon>Patatavirales</taxon>
        <taxon>Potyviridae</taxon>
        <taxon>Potyvirus</taxon>
        <taxon>Potyvirus capsimaculae</taxon>
        <taxon>Pepper mottle virus</taxon>
    </lineage>
</organism>
<organismHost>
    <name type="scientific">Capsicum annuum</name>
    <name type="common">Capsicum pepper</name>
    <dbReference type="NCBI Taxonomy" id="4072"/>
</organismHost>
<organismHost>
    <name type="scientific">Datura inoxia</name>
    <name type="common">Downy thornapple</name>
    <name type="synonym">Datura meteloides</name>
    <dbReference type="NCBI Taxonomy" id="4075"/>
</organismHost>
<organismHost>
    <name type="scientific">Solanum</name>
    <dbReference type="NCBI Taxonomy" id="4107"/>
</organismHost>
<evidence type="ECO:0000250" key="1"/>
<evidence type="ECO:0000250" key="2">
    <source>
        <dbReference type="UniProtKB" id="P04517"/>
    </source>
</evidence>
<evidence type="ECO:0000250" key="3">
    <source>
        <dbReference type="UniProtKB" id="P09814"/>
    </source>
</evidence>
<evidence type="ECO:0000250" key="4">
    <source>
        <dbReference type="UniProtKB" id="P13529"/>
    </source>
</evidence>
<evidence type="ECO:0000250" key="5">
    <source>
        <dbReference type="UniProtKB" id="P17767"/>
    </source>
</evidence>
<evidence type="ECO:0000250" key="6">
    <source>
        <dbReference type="UniProtKB" id="P18247"/>
    </source>
</evidence>
<evidence type="ECO:0000250" key="7">
    <source>
        <dbReference type="UniProtKB" id="P21231"/>
    </source>
</evidence>
<evidence type="ECO:0000250" key="8">
    <source>
        <dbReference type="UniProtKB" id="P89509"/>
    </source>
</evidence>
<evidence type="ECO:0000255" key="9"/>
<evidence type="ECO:0000255" key="10">
    <source>
        <dbReference type="PROSITE-ProRule" id="PRU00539"/>
    </source>
</evidence>
<evidence type="ECO:0000255" key="11">
    <source>
        <dbReference type="PROSITE-ProRule" id="PRU00541"/>
    </source>
</evidence>
<evidence type="ECO:0000255" key="12">
    <source>
        <dbReference type="PROSITE-ProRule" id="PRU00542"/>
    </source>
</evidence>
<evidence type="ECO:0000255" key="13">
    <source>
        <dbReference type="PROSITE-ProRule" id="PRU00766"/>
    </source>
</evidence>
<evidence type="ECO:0000255" key="14">
    <source>
        <dbReference type="PROSITE-ProRule" id="PRU01080"/>
    </source>
</evidence>
<evidence type="ECO:0000255" key="15">
    <source>
        <dbReference type="PROSITE-ProRule" id="PRU01219"/>
    </source>
</evidence>
<evidence type="ECO:0000256" key="16">
    <source>
        <dbReference type="SAM" id="MobiDB-lite"/>
    </source>
</evidence>
<evidence type="ECO:0000305" key="17"/>
<evidence type="ECO:0000305" key="18">
    <source>
    </source>
</evidence>
<feature type="chain" id="PRO_0000420003" description="Genome polyprotein">
    <location>
        <begin position="1"/>
        <end position="3068"/>
    </location>
</feature>
<feature type="chain" id="PRO_0000040295" description="P1 protease" evidence="9">
    <location>
        <begin position="1"/>
        <end position="287"/>
    </location>
</feature>
<feature type="chain" id="PRO_0000040296" description="Helper component proteinase" evidence="9">
    <location>
        <begin position="288"/>
        <end position="743"/>
    </location>
</feature>
<feature type="chain" id="PRO_0000040297" description="Protein P3" evidence="1">
    <location>
        <begin position="744"/>
        <end position="1104"/>
    </location>
</feature>
<feature type="chain" id="PRO_0000040298" description="6 kDa protein 1" evidence="1">
    <location>
        <begin position="1105"/>
        <end position="1156"/>
    </location>
</feature>
<feature type="chain" id="PRO_0000040299" description="Cytoplasmic inclusion protein" evidence="1">
    <location>
        <begin position="1157"/>
        <end position="1790"/>
    </location>
</feature>
<feature type="chain" id="PRO_0000040300" description="6 kDa protein 2" evidence="1">
    <location>
        <begin position="1791"/>
        <end position="1842"/>
    </location>
</feature>
<feature type="chain" id="PRO_0000040301" description="Viral genome-linked protein" evidence="1">
    <location>
        <begin position="1843"/>
        <end position="2030"/>
    </location>
</feature>
<feature type="chain" id="PRO_0000040302" description="Nuclear inclusion protein A" evidence="1">
    <location>
        <begin position="2031"/>
        <end position="2276"/>
    </location>
</feature>
<feature type="chain" id="PRO_0000040303" description="Nuclear inclusion protein B" evidence="1">
    <location>
        <begin position="2277"/>
        <end position="2795"/>
    </location>
</feature>
<feature type="chain" id="PRO_0000040304" description="Capsid protein" evidence="1">
    <location>
        <begin position="2796"/>
        <end position="3068"/>
    </location>
</feature>
<feature type="domain" description="Peptidase S30" evidence="15">
    <location>
        <begin position="144"/>
        <end position="287"/>
    </location>
</feature>
<feature type="domain" description="Peptidase C6" evidence="14">
    <location>
        <begin position="621"/>
        <end position="743"/>
    </location>
</feature>
<feature type="domain" description="Helicase ATP-binding" evidence="11">
    <location>
        <begin position="1228"/>
        <end position="1380"/>
    </location>
</feature>
<feature type="domain" description="Helicase C-terminal" evidence="12">
    <location>
        <begin position="1399"/>
        <end position="1558"/>
    </location>
</feature>
<feature type="domain" description="Peptidase C4" evidence="13">
    <location>
        <begin position="2031"/>
        <end position="2249"/>
    </location>
</feature>
<feature type="domain" description="RdRp catalytic" evidence="10">
    <location>
        <begin position="2518"/>
        <end position="2642"/>
    </location>
</feature>
<feature type="region of interest" description="Disordered" evidence="16">
    <location>
        <begin position="2796"/>
        <end position="2833"/>
    </location>
</feature>
<feature type="short sequence motif" description="Involved in interaction with stylet and aphid transmission" evidence="1">
    <location>
        <begin position="337"/>
        <end position="340"/>
    </location>
</feature>
<feature type="short sequence motif" description="Involved in virions binding and aphid transmission" evidence="1">
    <location>
        <begin position="595"/>
        <end position="597"/>
    </location>
</feature>
<feature type="short sequence motif" description="DECH box">
    <location>
        <begin position="1330"/>
        <end position="1333"/>
    </location>
</feature>
<feature type="short sequence motif" description="Nuclear localization signal" evidence="9">
    <location>
        <begin position="1884"/>
        <end position="1891"/>
    </location>
</feature>
<feature type="compositionally biased region" description="Basic and acidic residues" evidence="16">
    <location>
        <begin position="2822"/>
        <end position="2833"/>
    </location>
</feature>
<feature type="active site" description="For P1 proteinase activity" evidence="15">
    <location>
        <position position="195"/>
    </location>
</feature>
<feature type="active site" description="For P1 proteinase activity" evidence="15">
    <location>
        <position position="204"/>
    </location>
</feature>
<feature type="active site" description="For P1 proteinase activity" evidence="15">
    <location>
        <position position="238"/>
    </location>
</feature>
<feature type="active site" description="For helper component proteinase activity" evidence="14">
    <location>
        <position position="629"/>
    </location>
</feature>
<feature type="active site" description="For helper component proteinase activity" evidence="14">
    <location>
        <position position="702"/>
    </location>
</feature>
<feature type="active site" description="For nuclear inclusion protein A activity" evidence="13">
    <location>
        <position position="2076"/>
    </location>
</feature>
<feature type="active site" description="For nuclear inclusion protein A activity" evidence="13">
    <location>
        <position position="2111"/>
    </location>
</feature>
<feature type="active site" description="For nuclear inclusion protein A activity" evidence="13">
    <location>
        <position position="2181"/>
    </location>
</feature>
<feature type="binding site" evidence="11">
    <location>
        <begin position="1241"/>
        <end position="1248"/>
    </location>
    <ligand>
        <name>ATP</name>
        <dbReference type="ChEBI" id="CHEBI:30616"/>
    </ligand>
</feature>
<feature type="site" description="Cleavage; by P1 proteinase" evidence="15">
    <location>
        <begin position="287"/>
        <end position="288"/>
    </location>
</feature>
<feature type="site" description="Cleavage; by autolysis" evidence="14">
    <location>
        <begin position="743"/>
        <end position="744"/>
    </location>
</feature>
<feature type="site" description="Cleavage; by NIa-pro" evidence="6">
    <location>
        <begin position="1104"/>
        <end position="1105"/>
    </location>
</feature>
<feature type="site" description="Cleavage; by NIa-pro" evidence="6">
    <location>
        <begin position="1156"/>
        <end position="1157"/>
    </location>
</feature>
<feature type="site" description="Cleavage; by NIa-pro" evidence="6">
    <location>
        <begin position="1790"/>
        <end position="1791"/>
    </location>
</feature>
<feature type="site" description="Cleavage; by NIa-pro" evidence="6">
    <location>
        <begin position="1842"/>
        <end position="1843"/>
    </location>
</feature>
<feature type="site" description="Cleavage; by NIa-pro" evidence="6">
    <location>
        <begin position="2030"/>
        <end position="2031"/>
    </location>
</feature>
<feature type="site" description="Cleavage; by NIa-pro" evidence="6">
    <location>
        <begin position="2276"/>
        <end position="2277"/>
    </location>
</feature>
<feature type="site" description="Cleavage; by NIa-pro" evidence="6">
    <location>
        <begin position="2795"/>
        <end position="2796"/>
    </location>
</feature>
<feature type="modified residue" description="O-(5'-phospho-RNA)-tyrosine" evidence="3">
    <location>
        <position position="1906"/>
    </location>
</feature>
<feature type="modified residue" description="Phosphothreonine" evidence="5">
    <location>
        <position position="3051"/>
    </location>
</feature>
<sequence>MATSVIQFGSFVCNLPKSQPLCTTVHCPKQSMSTNIVRPSDPFAELEKHLEPYLQKRMDATIRQTKGGTLVYKHMSEAKRARKLRKKQREEEEVRLFMNAAPYIVSNITIGGGEVPSKMEEVSIKRPLNKTPSRKIKKSLTPVTFRDGHMNKFLRELRDCATRNSMTVHLIGKRKTELAFKRRASLNAVYATLHHMRGVDRKRDIVLEEWMNDYVLNLSKVSTWGSLFHAESLKRGDSGLILNARALRGKFGRCSRGFFIVRGKSDGVVLDARSKLSMATVTHMEQYSTPEAFWSGLEKKWSVVRKPTAHTCKPTYSVSNCGEVAAIIAQALFPCHKLTCGECSKEICDLTSNECVQELYKNTSLALERMNNLHPEFQHIVKVLSVVRQLTEASNHGTETFDEIFKMIGSKTQSPFTHLNKLNEFMLKGNENTSGEWLTARQHLRELVRFQKNRTDNIKKGDLASFRNKLSARAQYNLYLSCDNQLDKNASFLWGQREYHARRFFLNFFQQIDPSKGYLAYEDRTIPNGSRKLAIGNLIVPLDLAEFRKRMNGIDTQQPPIGKYCTSQLDGNFVYPCCCTTLDDGQPIRSAVYAPTKKHLVVGNTGDTKYINLPKGDTEMLYIALDGYCYINIYLAMLVNISEEEAKDFTKKVRDIFMPKLGKWPTLMDLATTCAQLRIFHPDVHDAELPRILVDHNTQTCHVVDSYGSISTGYHILKAATVSQLVLFADDNLESEIKHYRVGGIVENHKVQIDNQPSRCGVSEFHAIRMLIKGIYRPSVMYELLSEEPYLLVFSILSPSILIAMYNDRAFELAVQIWLEKEQSIPLIATILTNLAAKVSVATTLVQQLQLIELSADQLLNVTCDGFRVSFAYQSALTLLTRMRDQAKANSELISGGFNEYDQDLAWTLEKNYQGLLHDQWKELSSLEKFRYYWSSRKRKTRLRSNIKSRSSPVASAISSLSLKPFMGKVFSHMKAGAVCTKQGTKNFIDARCLGISTYFVGSLMRKFPSAKVLLSSLFVLGALLNITHAANRIIIDNRISREHAAALELYRKEDTCHELYTALERKLGEKPTWDEYCSYVAKINPAMLEFIKDSYDEKQVVHQRSTEDLKKVEHIIAFVTLAIMLFDSERSDCVFKTLNKFKGVVCSLGSGVRHQSLDDFVSTMDEKNFVVDFELNDSVQRKNLTTEITFESWWDEQVARGFTIPHYRTEGRFMEFTRATAAKVASDISISSERDFLIRGAVGSGKSTGLPHHLSTYGRVLLIEPTRPLAENVFKQLSGGPFFLKPTMRMRGNSVFGSSPISVMTSGFALHFFANNITQLQEIQFIIIDECHVMDASSMAFRSLIHTYHTNCKVLKVSATPPGREVEFTTQFPVKLVVEDSLSFKTFVESQGTGSNCDMIQYGNNLLVYVASYNEVDQLSKLLVAREFNVTKVDGRTMKHGELEIVTRGTKSKPHFVVATNIIENGVTLDIDVVIDFGMKVSPFLDVDNRSVAYNKVSISYGERIQRLGRVGRIQKGTALRIGHTEKGLIEIPQMISTEAALYCFAYNLPVMSSGVSTSMIKNCTIPQVRTMHTFELSPFFMYNFVSHDGTMHPVVHETLKRYKLRDSVIPLSESSIPYRASSDWITAGDYRRIGVKLDIPDETRIAFHIKTFHRKFTNNLWESVLKYKASAAFPTLRSSSITKIAYTLSTDLYAIPRTLAVVESLLEDERTKQYQFKSLIDNGCSSMFSVVGISNALRAKYSKDHTVENINKLETVKAQLKEFHNLNGSGDELNLIKRFESLQFVHHQSKSSLAKALGLRGVWNKSLIVRDAIIAAGVACGGAWLLYTWFTAKMSEVSHQGRSKTKRIQALKFRKARDKRAGFEIDNNEDTIEEYFGSAYTKKGKGKGTTVGMGRTNRRFINMYGFEPGQFSYIKFVDPLTGAQMEENVYADIVDVQEKFGDIRRQMILDDELDRRQTDVHNTIHAYLIKDWSNKALKVDLTPHNPLRVSDKASAIMKFPEREGELRQTGQAVEVDVCDIPKEVVKHEAKTLMRGLRDYNPIAQTVCKLTVKSELGETSTYGLGFGGLIIANHHLFKSFNGSLEVKSHHGVFRVPNLMAISVLPLKGRDMIIIKMPKDFPVFPQRLKFREPASTDRVCLIGSNFQERYISTTVSEISATHPVPRSTFWKHWISTDDGHCGLPIVSTTDGFILGLHSLANNRNSENYYTAFDSDFEMKILRSGENTEWVKNWKYNPDTVLWGPLQLTKGTPSGMFKTTKMIEDLLAFKSESVREQAHTSSWMLEVLKENLKAIAYMKSQLVTKHVVKGECMMFKQYLQENPRANEFFQPKMWAYGKSMLNKEAYIKDIMKYSKVIDVGVVDCDRHLRKLSLELLYTQIHGFRKCSYITDEEEIFKALNITTAVGAMYGGKKKEYFEKFTTEDKAEILRQSCLRLYTGKLGVWEWALKAELRSKEKIEANKTRTFTAAPIDTLLGGKVCVDDLNNQFYSKNIECCWTVGMTKFYGGWDKLLTALPAGWIYCDADGSQFDSSLTPYLINAVLTIRYAFMEDWDIGYKMLQNLYTEIIYTPISTPDGTIVKKFRGNNSGQPSTVVDNSLMVVLAMHYAFVREGIAFEEIDSICKFFVNGDDLLIAVNPERESLLDTLSNHFSDLGLNYDFSSRTRNKSELWFMSHCGISVEGTYIPKLEEERIVSILQWDRAELPEYRLEAICAAMIESWGYPQLTHEIRRFYSWLIEKNPYADLASEGKAPYISELALKKLYLNQDVQMMSFRSYLKYFADADEEFECGTYEVRHQSSSRSDTLDAGEEKKKNKEVATVSDGMGKKEVESTRDSDVNAGTVGTFTIPRIKSITEKMRMPKQKRKGVLNLAHLLEYKPSQVDISNTRSTQAQFDNWYCEVMKAYDLQEEAMGTVMNGLMVWCIENGTSPNISGTWTMMDGDEQVEFPLKPVIENAKPTFRQIMAHFSDVAEAYIEMRNKQEPYMPRYGLVRNLRDMGLARYAFDFYEVTSRTSTRAREAHIQMKAAALKSAQTRLFGLDGGIGTQGENTERHTTEDVSPDMHTLLGVREM</sequence>